<dbReference type="EMBL" id="AL766850">
    <property type="protein sequence ID" value="CAD47097.1"/>
    <property type="molecule type" value="Genomic_DNA"/>
</dbReference>
<dbReference type="RefSeq" id="WP_000916503.1">
    <property type="nucleotide sequence ID" value="NC_004368.1"/>
</dbReference>
<dbReference type="SMR" id="Q8E4G3"/>
<dbReference type="GeneID" id="98393117"/>
<dbReference type="KEGG" id="san:gbs1438"/>
<dbReference type="eggNOG" id="COG0211">
    <property type="taxonomic scope" value="Bacteria"/>
</dbReference>
<dbReference type="HOGENOM" id="CLU_095424_4_0_9"/>
<dbReference type="Proteomes" id="UP000000823">
    <property type="component" value="Chromosome"/>
</dbReference>
<dbReference type="GO" id="GO:0022625">
    <property type="term" value="C:cytosolic large ribosomal subunit"/>
    <property type="evidence" value="ECO:0007669"/>
    <property type="project" value="TreeGrafter"/>
</dbReference>
<dbReference type="GO" id="GO:0003735">
    <property type="term" value="F:structural constituent of ribosome"/>
    <property type="evidence" value="ECO:0007669"/>
    <property type="project" value="InterPro"/>
</dbReference>
<dbReference type="GO" id="GO:0006412">
    <property type="term" value="P:translation"/>
    <property type="evidence" value="ECO:0007669"/>
    <property type="project" value="UniProtKB-UniRule"/>
</dbReference>
<dbReference type="FunFam" id="2.40.50.100:FF:000004">
    <property type="entry name" value="50S ribosomal protein L27"/>
    <property type="match status" value="1"/>
</dbReference>
<dbReference type="Gene3D" id="2.40.50.100">
    <property type="match status" value="1"/>
</dbReference>
<dbReference type="HAMAP" id="MF_00539">
    <property type="entry name" value="Ribosomal_bL27"/>
    <property type="match status" value="1"/>
</dbReference>
<dbReference type="InterPro" id="IPR001684">
    <property type="entry name" value="Ribosomal_bL27"/>
</dbReference>
<dbReference type="InterPro" id="IPR018261">
    <property type="entry name" value="Ribosomal_bL27_CS"/>
</dbReference>
<dbReference type="NCBIfam" id="TIGR00062">
    <property type="entry name" value="L27"/>
    <property type="match status" value="1"/>
</dbReference>
<dbReference type="PANTHER" id="PTHR15893:SF0">
    <property type="entry name" value="LARGE RIBOSOMAL SUBUNIT PROTEIN BL27M"/>
    <property type="match status" value="1"/>
</dbReference>
<dbReference type="PANTHER" id="PTHR15893">
    <property type="entry name" value="RIBOSOMAL PROTEIN L27"/>
    <property type="match status" value="1"/>
</dbReference>
<dbReference type="Pfam" id="PF01016">
    <property type="entry name" value="Ribosomal_L27"/>
    <property type="match status" value="1"/>
</dbReference>
<dbReference type="PRINTS" id="PR00063">
    <property type="entry name" value="RIBOSOMALL27"/>
</dbReference>
<dbReference type="SUPFAM" id="SSF110324">
    <property type="entry name" value="Ribosomal L27 protein-like"/>
    <property type="match status" value="1"/>
</dbReference>
<dbReference type="PROSITE" id="PS00831">
    <property type="entry name" value="RIBOSOMAL_L27"/>
    <property type="match status" value="1"/>
</dbReference>
<gene>
    <name evidence="2" type="primary">rpmA</name>
    <name type="ordered locus">gbs1438</name>
</gene>
<comment type="PTM">
    <text evidence="1">The N-terminus is cleaved by ribosomal processing cysteine protease Prp.</text>
</comment>
<comment type="similarity">
    <text evidence="2">Belongs to the bacterial ribosomal protein bL27 family.</text>
</comment>
<name>RL27_STRA3</name>
<organism>
    <name type="scientific">Streptococcus agalactiae serotype III (strain NEM316)</name>
    <dbReference type="NCBI Taxonomy" id="211110"/>
    <lineage>
        <taxon>Bacteria</taxon>
        <taxon>Bacillati</taxon>
        <taxon>Bacillota</taxon>
        <taxon>Bacilli</taxon>
        <taxon>Lactobacillales</taxon>
        <taxon>Streptococcaceae</taxon>
        <taxon>Streptococcus</taxon>
    </lineage>
</organism>
<protein>
    <recommendedName>
        <fullName evidence="2">Large ribosomal subunit protein bL27</fullName>
    </recommendedName>
    <alternativeName>
        <fullName evidence="4">50S ribosomal protein L27</fullName>
    </alternativeName>
</protein>
<keyword id="KW-0687">Ribonucleoprotein</keyword>
<keyword id="KW-0689">Ribosomal protein</keyword>
<evidence type="ECO:0000250" key="1">
    <source>
        <dbReference type="UniProtKB" id="Q2FXT0"/>
    </source>
</evidence>
<evidence type="ECO:0000255" key="2">
    <source>
        <dbReference type="HAMAP-Rule" id="MF_00539"/>
    </source>
</evidence>
<evidence type="ECO:0000256" key="3">
    <source>
        <dbReference type="SAM" id="MobiDB-lite"/>
    </source>
</evidence>
<evidence type="ECO:0000305" key="4"/>
<proteinExistence type="inferred from homology"/>
<feature type="propeptide" id="PRO_0000459945" evidence="1">
    <location>
        <begin position="1"/>
        <end position="12"/>
    </location>
</feature>
<feature type="chain" id="PRO_0000181172" description="Large ribosomal subunit protein bL27">
    <location>
        <begin position="13"/>
        <end position="97"/>
    </location>
</feature>
<feature type="region of interest" description="Disordered" evidence="3">
    <location>
        <begin position="14"/>
        <end position="37"/>
    </location>
</feature>
<accession>Q8E4G3</accession>
<reference key="1">
    <citation type="journal article" date="2002" name="Mol. Microbiol.">
        <title>Genome sequence of Streptococcus agalactiae, a pathogen causing invasive neonatal disease.</title>
        <authorList>
            <person name="Glaser P."/>
            <person name="Rusniok C."/>
            <person name="Buchrieser C."/>
            <person name="Chevalier F."/>
            <person name="Frangeul L."/>
            <person name="Msadek T."/>
            <person name="Zouine M."/>
            <person name="Couve E."/>
            <person name="Lalioui L."/>
            <person name="Poyart C."/>
            <person name="Trieu-Cuot P."/>
            <person name="Kunst F."/>
        </authorList>
    </citation>
    <scope>NUCLEOTIDE SEQUENCE [LARGE SCALE GENOMIC DNA]</scope>
    <source>
        <strain>NEM316</strain>
    </source>
</reference>
<sequence length="97" mass="10390">MLKMNLANLQLFAHKKGGGSTSNGRDSQAKRLGAKAADGQTVSGGSILYRQRGTHIYPGANVGRGGDDTLFAKVEGVVRFERKGRDKKQVSVYPIAK</sequence>